<sequence length="113" mass="12509">MQAKAVARTVRIAPRKVRLVVDLIRGKQVGEAIAILNHTPKTASPVVEKVLKSAIANAEHNYEMDINSLVVEKVFVDEGPTLKRFRPRAMGRASQINKRTSHITVVVSEKKEG</sequence>
<comment type="function">
    <text evidence="1">This protein binds specifically to 23S rRNA; its binding is stimulated by other ribosomal proteins, e.g. L4, L17, and L20. It is important during the early stages of 50S assembly. It makes multiple contacts with different domains of the 23S rRNA in the assembled 50S subunit and ribosome (By similarity).</text>
</comment>
<comment type="function">
    <text evidence="1">The globular domain of the protein is located near the polypeptide exit tunnel on the outside of the subunit, while an extended beta-hairpin is found that lines the wall of the exit tunnel in the center of the 70S ribosome.</text>
</comment>
<comment type="subunit">
    <text evidence="1">Part of the 50S ribosomal subunit.</text>
</comment>
<comment type="similarity">
    <text evidence="1">Belongs to the universal ribosomal protein uL22 family.</text>
</comment>
<gene>
    <name evidence="1" type="primary">rplV</name>
    <name type="ordered locus">BCAH820_0127</name>
</gene>
<dbReference type="EMBL" id="CP001283">
    <property type="protein sequence ID" value="ACK92289.1"/>
    <property type="molecule type" value="Genomic_DNA"/>
</dbReference>
<dbReference type="RefSeq" id="WP_001148025.1">
    <property type="nucleotide sequence ID" value="NC_011773.1"/>
</dbReference>
<dbReference type="SMR" id="B7JKC4"/>
<dbReference type="GeneID" id="93010938"/>
<dbReference type="KEGG" id="bcu:BCAH820_0127"/>
<dbReference type="HOGENOM" id="CLU_083987_3_3_9"/>
<dbReference type="Proteomes" id="UP000001363">
    <property type="component" value="Chromosome"/>
</dbReference>
<dbReference type="GO" id="GO:0022625">
    <property type="term" value="C:cytosolic large ribosomal subunit"/>
    <property type="evidence" value="ECO:0007669"/>
    <property type="project" value="TreeGrafter"/>
</dbReference>
<dbReference type="GO" id="GO:0019843">
    <property type="term" value="F:rRNA binding"/>
    <property type="evidence" value="ECO:0007669"/>
    <property type="project" value="UniProtKB-UniRule"/>
</dbReference>
<dbReference type="GO" id="GO:0003735">
    <property type="term" value="F:structural constituent of ribosome"/>
    <property type="evidence" value="ECO:0007669"/>
    <property type="project" value="InterPro"/>
</dbReference>
<dbReference type="GO" id="GO:0006412">
    <property type="term" value="P:translation"/>
    <property type="evidence" value="ECO:0007669"/>
    <property type="project" value="UniProtKB-UniRule"/>
</dbReference>
<dbReference type="CDD" id="cd00336">
    <property type="entry name" value="Ribosomal_L22"/>
    <property type="match status" value="1"/>
</dbReference>
<dbReference type="FunFam" id="3.90.470.10:FF:000001">
    <property type="entry name" value="50S ribosomal protein L22"/>
    <property type="match status" value="1"/>
</dbReference>
<dbReference type="Gene3D" id="3.90.470.10">
    <property type="entry name" value="Ribosomal protein L22/L17"/>
    <property type="match status" value="1"/>
</dbReference>
<dbReference type="HAMAP" id="MF_01331_B">
    <property type="entry name" value="Ribosomal_uL22_B"/>
    <property type="match status" value="1"/>
</dbReference>
<dbReference type="InterPro" id="IPR001063">
    <property type="entry name" value="Ribosomal_uL22"/>
</dbReference>
<dbReference type="InterPro" id="IPR005727">
    <property type="entry name" value="Ribosomal_uL22_bac/chlpt-type"/>
</dbReference>
<dbReference type="InterPro" id="IPR047867">
    <property type="entry name" value="Ribosomal_uL22_bac/org-type"/>
</dbReference>
<dbReference type="InterPro" id="IPR018260">
    <property type="entry name" value="Ribosomal_uL22_CS"/>
</dbReference>
<dbReference type="InterPro" id="IPR036394">
    <property type="entry name" value="Ribosomal_uL22_sf"/>
</dbReference>
<dbReference type="NCBIfam" id="TIGR01044">
    <property type="entry name" value="rplV_bact"/>
    <property type="match status" value="1"/>
</dbReference>
<dbReference type="PANTHER" id="PTHR13501">
    <property type="entry name" value="CHLOROPLAST 50S RIBOSOMAL PROTEIN L22-RELATED"/>
    <property type="match status" value="1"/>
</dbReference>
<dbReference type="PANTHER" id="PTHR13501:SF8">
    <property type="entry name" value="LARGE RIBOSOMAL SUBUNIT PROTEIN UL22M"/>
    <property type="match status" value="1"/>
</dbReference>
<dbReference type="Pfam" id="PF00237">
    <property type="entry name" value="Ribosomal_L22"/>
    <property type="match status" value="1"/>
</dbReference>
<dbReference type="SUPFAM" id="SSF54843">
    <property type="entry name" value="Ribosomal protein L22"/>
    <property type="match status" value="1"/>
</dbReference>
<dbReference type="PROSITE" id="PS00464">
    <property type="entry name" value="RIBOSOMAL_L22"/>
    <property type="match status" value="1"/>
</dbReference>
<protein>
    <recommendedName>
        <fullName evidence="1">Large ribosomal subunit protein uL22</fullName>
    </recommendedName>
    <alternativeName>
        <fullName evidence="2">50S ribosomal protein L22</fullName>
    </alternativeName>
</protein>
<keyword id="KW-0687">Ribonucleoprotein</keyword>
<keyword id="KW-0689">Ribosomal protein</keyword>
<keyword id="KW-0694">RNA-binding</keyword>
<keyword id="KW-0699">rRNA-binding</keyword>
<reference key="1">
    <citation type="submission" date="2008-10" db="EMBL/GenBank/DDBJ databases">
        <title>Genome sequence of Bacillus cereus AH820.</title>
        <authorList>
            <person name="Dodson R.J."/>
            <person name="Durkin A.S."/>
            <person name="Rosovitz M.J."/>
            <person name="Rasko D.A."/>
            <person name="Hoffmaster A."/>
            <person name="Ravel J."/>
            <person name="Sutton G."/>
        </authorList>
    </citation>
    <scope>NUCLEOTIDE SEQUENCE [LARGE SCALE GENOMIC DNA]</scope>
    <source>
        <strain>AH820</strain>
    </source>
</reference>
<accession>B7JKC4</accession>
<evidence type="ECO:0000255" key="1">
    <source>
        <dbReference type="HAMAP-Rule" id="MF_01331"/>
    </source>
</evidence>
<evidence type="ECO:0000305" key="2"/>
<feature type="chain" id="PRO_1000142227" description="Large ribosomal subunit protein uL22">
    <location>
        <begin position="1"/>
        <end position="113"/>
    </location>
</feature>
<proteinExistence type="inferred from homology"/>
<name>RL22_BACC0</name>
<organism>
    <name type="scientific">Bacillus cereus (strain AH820)</name>
    <dbReference type="NCBI Taxonomy" id="405535"/>
    <lineage>
        <taxon>Bacteria</taxon>
        <taxon>Bacillati</taxon>
        <taxon>Bacillota</taxon>
        <taxon>Bacilli</taxon>
        <taxon>Bacillales</taxon>
        <taxon>Bacillaceae</taxon>
        <taxon>Bacillus</taxon>
        <taxon>Bacillus cereus group</taxon>
    </lineage>
</organism>